<name>UBC2_FUSSL</name>
<gene>
    <name type="primary">UBC2</name>
    <name type="synonym">RAD6</name>
</gene>
<sequence length="151" mass="17200">MSTAARRRLMRDFKRMQTDPPAGVSASPVPDNVMTWNAVIIGPADTPFEDGTFRLVMQFEEQYPNKPPQVKFISEMFHPNVYATGELCLDILQNRWSPTYDVAAVLTSIQSLLNDPNTGSPANVEASNLYKDNRKEYTKRVRETVEKSWED</sequence>
<evidence type="ECO:0000250" key="1">
    <source>
        <dbReference type="UniProtKB" id="Q5VVX9"/>
    </source>
</evidence>
<evidence type="ECO:0000255" key="2">
    <source>
        <dbReference type="PROSITE-ProRule" id="PRU00388"/>
    </source>
</evidence>
<evidence type="ECO:0000255" key="3">
    <source>
        <dbReference type="PROSITE-ProRule" id="PRU10133"/>
    </source>
</evidence>
<dbReference type="EC" id="2.3.2.23"/>
<dbReference type="EMBL" id="U86521">
    <property type="protein sequence ID" value="AAB47850.1"/>
    <property type="molecule type" value="Genomic_DNA"/>
</dbReference>
<dbReference type="PIR" id="T51931">
    <property type="entry name" value="T51931"/>
</dbReference>
<dbReference type="SMR" id="P78717"/>
<dbReference type="VEuPathDB" id="FungiDB:B0J15DRAFT_382276"/>
<dbReference type="OrthoDB" id="9984419at2759"/>
<dbReference type="UniPathway" id="UPA00143"/>
<dbReference type="GO" id="GO:0005737">
    <property type="term" value="C:cytoplasm"/>
    <property type="evidence" value="ECO:0007669"/>
    <property type="project" value="UniProtKB-SubCell"/>
</dbReference>
<dbReference type="GO" id="GO:0005634">
    <property type="term" value="C:nucleus"/>
    <property type="evidence" value="ECO:0007669"/>
    <property type="project" value="UniProtKB-SubCell"/>
</dbReference>
<dbReference type="GO" id="GO:0005524">
    <property type="term" value="F:ATP binding"/>
    <property type="evidence" value="ECO:0007669"/>
    <property type="project" value="UniProtKB-KW"/>
</dbReference>
<dbReference type="GO" id="GO:0061631">
    <property type="term" value="F:ubiquitin conjugating enzyme activity"/>
    <property type="evidence" value="ECO:0007669"/>
    <property type="project" value="UniProtKB-EC"/>
</dbReference>
<dbReference type="GO" id="GO:0006325">
    <property type="term" value="P:chromatin organization"/>
    <property type="evidence" value="ECO:0007669"/>
    <property type="project" value="UniProtKB-KW"/>
</dbReference>
<dbReference type="GO" id="GO:0006281">
    <property type="term" value="P:DNA repair"/>
    <property type="evidence" value="ECO:0007669"/>
    <property type="project" value="UniProtKB-KW"/>
</dbReference>
<dbReference type="GO" id="GO:0016567">
    <property type="term" value="P:protein ubiquitination"/>
    <property type="evidence" value="ECO:0007669"/>
    <property type="project" value="UniProtKB-UniPathway"/>
</dbReference>
<dbReference type="GO" id="GO:0030435">
    <property type="term" value="P:sporulation resulting in formation of a cellular spore"/>
    <property type="evidence" value="ECO:0007669"/>
    <property type="project" value="UniProtKB-KW"/>
</dbReference>
<dbReference type="CDD" id="cd23790">
    <property type="entry name" value="UBCc_UBE2A_2B"/>
    <property type="match status" value="1"/>
</dbReference>
<dbReference type="FunFam" id="3.10.110.10:FF:000007">
    <property type="entry name" value="Ubiquitin-conjugating enzyme E2 2"/>
    <property type="match status" value="1"/>
</dbReference>
<dbReference type="Gene3D" id="3.10.110.10">
    <property type="entry name" value="Ubiquitin Conjugating Enzyme"/>
    <property type="match status" value="1"/>
</dbReference>
<dbReference type="InterPro" id="IPR050113">
    <property type="entry name" value="Ub_conjugating_enzyme"/>
</dbReference>
<dbReference type="InterPro" id="IPR000608">
    <property type="entry name" value="UBQ-conjugat_E2_core"/>
</dbReference>
<dbReference type="InterPro" id="IPR023313">
    <property type="entry name" value="UBQ-conjugating_AS"/>
</dbReference>
<dbReference type="InterPro" id="IPR016135">
    <property type="entry name" value="UBQ-conjugating_enzyme/RWD"/>
</dbReference>
<dbReference type="PANTHER" id="PTHR24067">
    <property type="entry name" value="UBIQUITIN-CONJUGATING ENZYME E2"/>
    <property type="match status" value="1"/>
</dbReference>
<dbReference type="Pfam" id="PF00179">
    <property type="entry name" value="UQ_con"/>
    <property type="match status" value="1"/>
</dbReference>
<dbReference type="SMART" id="SM00212">
    <property type="entry name" value="UBCc"/>
    <property type="match status" value="1"/>
</dbReference>
<dbReference type="SUPFAM" id="SSF54495">
    <property type="entry name" value="UBC-like"/>
    <property type="match status" value="1"/>
</dbReference>
<dbReference type="PROSITE" id="PS00183">
    <property type="entry name" value="UBC_1"/>
    <property type="match status" value="1"/>
</dbReference>
<dbReference type="PROSITE" id="PS50127">
    <property type="entry name" value="UBC_2"/>
    <property type="match status" value="1"/>
</dbReference>
<feature type="chain" id="PRO_0000082534" description="Ubiquitin-conjugating enzyme E2 2">
    <location>
        <begin position="1"/>
        <end position="151"/>
    </location>
</feature>
<feature type="domain" description="UBC core" evidence="2">
    <location>
        <begin position="4"/>
        <end position="150"/>
    </location>
</feature>
<feature type="active site" description="Glycyl thioester intermediate" evidence="2 3">
    <location>
        <position position="88"/>
    </location>
</feature>
<protein>
    <recommendedName>
        <fullName>Ubiquitin-conjugating enzyme E2 2</fullName>
        <ecNumber>2.3.2.23</ecNumber>
    </recommendedName>
    <alternativeName>
        <fullName>E2 ubiquitin-conjugating enzyme 2</fullName>
    </alternativeName>
    <alternativeName>
        <fullName>Radiation sensitivity protein 6</fullName>
    </alternativeName>
    <alternativeName>
        <fullName>Ubiquitin carrier protein UBC2</fullName>
    </alternativeName>
    <alternativeName>
        <fullName>Ubiquitin-protein ligase UBC2</fullName>
    </alternativeName>
</protein>
<proteinExistence type="inferred from homology"/>
<accession>P78717</accession>
<comment type="function">
    <text evidence="2">Catalyzes the covalent attachment of ubiquitin to other proteins. Plays a role in transcription regulation by catalyzing the monoubiquitination of histone H2B to form H2BK123ub1. H2BK123ub1 gives a specific tag for epigenetic transcriptional activation and is also a prerequisite for H3K4me and H3K79me formation. Also involved in postreplication repair of UV-damaged DNA, in N-end rule-dependent protein degradation and in sporulation.</text>
</comment>
<comment type="catalytic activity">
    <reaction evidence="2 3">
        <text>S-ubiquitinyl-[E1 ubiquitin-activating enzyme]-L-cysteine + [E2 ubiquitin-conjugating enzyme]-L-cysteine = [E1 ubiquitin-activating enzyme]-L-cysteine + S-ubiquitinyl-[E2 ubiquitin-conjugating enzyme]-L-cysteine.</text>
        <dbReference type="EC" id="2.3.2.23"/>
    </reaction>
</comment>
<comment type="pathway">
    <text evidence="2">Protein modification; protein ubiquitination.</text>
</comment>
<comment type="subcellular location">
    <subcellularLocation>
        <location evidence="1">Cytoplasm</location>
    </subcellularLocation>
    <subcellularLocation>
        <location evidence="1">Nucleus</location>
    </subcellularLocation>
</comment>
<comment type="similarity">
    <text evidence="2">Belongs to the ubiquitin-conjugating enzyme family.</text>
</comment>
<keyword id="KW-0067">ATP-binding</keyword>
<keyword id="KW-0156">Chromatin regulator</keyword>
<keyword id="KW-0963">Cytoplasm</keyword>
<keyword id="KW-0227">DNA damage</keyword>
<keyword id="KW-0234">DNA repair</keyword>
<keyword id="KW-0547">Nucleotide-binding</keyword>
<keyword id="KW-0539">Nucleus</keyword>
<keyword id="KW-0749">Sporulation</keyword>
<keyword id="KW-0804">Transcription</keyword>
<keyword id="KW-0805">Transcription regulation</keyword>
<keyword id="KW-0808">Transferase</keyword>
<keyword id="KW-0833">Ubl conjugation pathway</keyword>
<reference key="1">
    <citation type="journal article" date="1998" name="Mol. Biol. Cell">
        <title>A fungal kinesin required for organelle motility, hyphal growth, and morphogenesis.</title>
        <authorList>
            <person name="Wu Q."/>
            <person name="Sandrock T.M."/>
            <person name="Turgeon B.G."/>
            <person name="Yoder O.C."/>
            <person name="Wirsel S.G."/>
            <person name="Aist J.R."/>
        </authorList>
    </citation>
    <scope>NUCLEOTIDE SEQUENCE [GENOMIC DNA]</scope>
    <source>
        <strain>T213</strain>
    </source>
</reference>
<organism>
    <name type="scientific">Fusarium solani</name>
    <name type="common">Filamentous fungus</name>
    <dbReference type="NCBI Taxonomy" id="169388"/>
    <lineage>
        <taxon>Eukaryota</taxon>
        <taxon>Fungi</taxon>
        <taxon>Dikarya</taxon>
        <taxon>Ascomycota</taxon>
        <taxon>Pezizomycotina</taxon>
        <taxon>Sordariomycetes</taxon>
        <taxon>Hypocreomycetidae</taxon>
        <taxon>Hypocreales</taxon>
        <taxon>Nectriaceae</taxon>
        <taxon>Fusarium</taxon>
        <taxon>Fusarium solani species complex</taxon>
    </lineage>
</organism>